<comment type="function">
    <text evidence="1">Required for DNA double-strand breaks (DSBs) formation in unsynapsed regions during meiotic recombination.</text>
</comment>
<comment type="subcellular location">
    <subcellularLocation>
        <location evidence="1">Chromosome</location>
    </subcellularLocation>
    <text evidence="1">Specifically localizes to unsynapsed chromosomal regions during meiosis.</text>
</comment>
<comment type="similarity">
    <text evidence="3">Belongs to the MEI4L family.</text>
</comment>
<keyword id="KW-0158">Chromosome</keyword>
<keyword id="KW-0233">DNA recombination</keyword>
<keyword id="KW-0469">Meiosis</keyword>
<keyword id="KW-1185">Reference proteome</keyword>
<feature type="chain" id="PRO_0000343705" description="Meiosis-specific protein MEI4">
    <location>
        <begin position="1"/>
        <end position="363"/>
    </location>
</feature>
<feature type="region of interest" description="Disordered" evidence="2">
    <location>
        <begin position="109"/>
        <end position="130"/>
    </location>
</feature>
<feature type="sequence conflict" description="In Ref. 2; BM141230." evidence="3" ref="2">
    <original>N</original>
    <variation>K</variation>
    <location>
        <position position="233"/>
    </location>
</feature>
<feature type="sequence conflict" description="In Ref. 2; BM141230." evidence="3" ref="2">
    <original>R</original>
    <variation>G</variation>
    <location>
        <position position="284"/>
    </location>
</feature>
<feature type="sequence conflict" description="In Ref. 2; BM141230." evidence="3" ref="2">
    <original>R</original>
    <variation>G</variation>
    <location>
        <position position="291"/>
    </location>
</feature>
<feature type="sequence conflict" description="In Ref. 2; BM141230." evidence="3" ref="2">
    <original>V</original>
    <variation>M</variation>
    <location>
        <position position="325"/>
    </location>
</feature>
<feature type="sequence conflict" description="In Ref. 2; BM141230." evidence="3" ref="2">
    <original>R</original>
    <variation>Q</variation>
    <location>
        <position position="332"/>
    </location>
</feature>
<evidence type="ECO:0000250" key="1">
    <source>
        <dbReference type="UniProtKB" id="Q8BRM6"/>
    </source>
</evidence>
<evidence type="ECO:0000256" key="2">
    <source>
        <dbReference type="SAM" id="MobiDB-lite"/>
    </source>
</evidence>
<evidence type="ECO:0000305" key="3"/>
<reference key="1">
    <citation type="journal article" date="2013" name="Nature">
        <title>The zebrafish reference genome sequence and its relationship to the human genome.</title>
        <authorList>
            <person name="Howe K."/>
            <person name="Clark M.D."/>
            <person name="Torroja C.F."/>
            <person name="Torrance J."/>
            <person name="Berthelot C."/>
            <person name="Muffato M."/>
            <person name="Collins J.E."/>
            <person name="Humphray S."/>
            <person name="McLaren K."/>
            <person name="Matthews L."/>
            <person name="McLaren S."/>
            <person name="Sealy I."/>
            <person name="Caccamo M."/>
            <person name="Churcher C."/>
            <person name="Scott C."/>
            <person name="Barrett J.C."/>
            <person name="Koch R."/>
            <person name="Rauch G.J."/>
            <person name="White S."/>
            <person name="Chow W."/>
            <person name="Kilian B."/>
            <person name="Quintais L.T."/>
            <person name="Guerra-Assuncao J.A."/>
            <person name="Zhou Y."/>
            <person name="Gu Y."/>
            <person name="Yen J."/>
            <person name="Vogel J.H."/>
            <person name="Eyre T."/>
            <person name="Redmond S."/>
            <person name="Banerjee R."/>
            <person name="Chi J."/>
            <person name="Fu B."/>
            <person name="Langley E."/>
            <person name="Maguire S.F."/>
            <person name="Laird G.K."/>
            <person name="Lloyd D."/>
            <person name="Kenyon E."/>
            <person name="Donaldson S."/>
            <person name="Sehra H."/>
            <person name="Almeida-King J."/>
            <person name="Loveland J."/>
            <person name="Trevanion S."/>
            <person name="Jones M."/>
            <person name="Quail M."/>
            <person name="Willey D."/>
            <person name="Hunt A."/>
            <person name="Burton J."/>
            <person name="Sims S."/>
            <person name="McLay K."/>
            <person name="Plumb B."/>
            <person name="Davis J."/>
            <person name="Clee C."/>
            <person name="Oliver K."/>
            <person name="Clark R."/>
            <person name="Riddle C."/>
            <person name="Elliot D."/>
            <person name="Threadgold G."/>
            <person name="Harden G."/>
            <person name="Ware D."/>
            <person name="Begum S."/>
            <person name="Mortimore B."/>
            <person name="Kerry G."/>
            <person name="Heath P."/>
            <person name="Phillimore B."/>
            <person name="Tracey A."/>
            <person name="Corby N."/>
            <person name="Dunn M."/>
            <person name="Johnson C."/>
            <person name="Wood J."/>
            <person name="Clark S."/>
            <person name="Pelan S."/>
            <person name="Griffiths G."/>
            <person name="Smith M."/>
            <person name="Glithero R."/>
            <person name="Howden P."/>
            <person name="Barker N."/>
            <person name="Lloyd C."/>
            <person name="Stevens C."/>
            <person name="Harley J."/>
            <person name="Holt K."/>
            <person name="Panagiotidis G."/>
            <person name="Lovell J."/>
            <person name="Beasley H."/>
            <person name="Henderson C."/>
            <person name="Gordon D."/>
            <person name="Auger K."/>
            <person name="Wright D."/>
            <person name="Collins J."/>
            <person name="Raisen C."/>
            <person name="Dyer L."/>
            <person name="Leung K."/>
            <person name="Robertson L."/>
            <person name="Ambridge K."/>
            <person name="Leongamornlert D."/>
            <person name="McGuire S."/>
            <person name="Gilderthorp R."/>
            <person name="Griffiths C."/>
            <person name="Manthravadi D."/>
            <person name="Nichol S."/>
            <person name="Barker G."/>
            <person name="Whitehead S."/>
            <person name="Kay M."/>
            <person name="Brown J."/>
            <person name="Murnane C."/>
            <person name="Gray E."/>
            <person name="Humphries M."/>
            <person name="Sycamore N."/>
            <person name="Barker D."/>
            <person name="Saunders D."/>
            <person name="Wallis J."/>
            <person name="Babbage A."/>
            <person name="Hammond S."/>
            <person name="Mashreghi-Mohammadi M."/>
            <person name="Barr L."/>
            <person name="Martin S."/>
            <person name="Wray P."/>
            <person name="Ellington A."/>
            <person name="Matthews N."/>
            <person name="Ellwood M."/>
            <person name="Woodmansey R."/>
            <person name="Clark G."/>
            <person name="Cooper J."/>
            <person name="Tromans A."/>
            <person name="Grafham D."/>
            <person name="Skuce C."/>
            <person name="Pandian R."/>
            <person name="Andrews R."/>
            <person name="Harrison E."/>
            <person name="Kimberley A."/>
            <person name="Garnett J."/>
            <person name="Fosker N."/>
            <person name="Hall R."/>
            <person name="Garner P."/>
            <person name="Kelly D."/>
            <person name="Bird C."/>
            <person name="Palmer S."/>
            <person name="Gehring I."/>
            <person name="Berger A."/>
            <person name="Dooley C.M."/>
            <person name="Ersan-Urun Z."/>
            <person name="Eser C."/>
            <person name="Geiger H."/>
            <person name="Geisler M."/>
            <person name="Karotki L."/>
            <person name="Kirn A."/>
            <person name="Konantz J."/>
            <person name="Konantz M."/>
            <person name="Oberlander M."/>
            <person name="Rudolph-Geiger S."/>
            <person name="Teucke M."/>
            <person name="Lanz C."/>
            <person name="Raddatz G."/>
            <person name="Osoegawa K."/>
            <person name="Zhu B."/>
            <person name="Rapp A."/>
            <person name="Widaa S."/>
            <person name="Langford C."/>
            <person name="Yang F."/>
            <person name="Schuster S.C."/>
            <person name="Carter N.P."/>
            <person name="Harrow J."/>
            <person name="Ning Z."/>
            <person name="Herrero J."/>
            <person name="Searle S.M."/>
            <person name="Enright A."/>
            <person name="Geisler R."/>
            <person name="Plasterk R.H."/>
            <person name="Lee C."/>
            <person name="Westerfield M."/>
            <person name="de Jong P.J."/>
            <person name="Zon L.I."/>
            <person name="Postlethwait J.H."/>
            <person name="Nusslein-Volhard C."/>
            <person name="Hubbard T.J."/>
            <person name="Roest Crollius H."/>
            <person name="Rogers J."/>
            <person name="Stemple D.L."/>
        </authorList>
    </citation>
    <scope>NUCLEOTIDE SEQUENCE [LARGE SCALE GENOMIC DNA]</scope>
    <source>
        <strain>Tuebingen</strain>
    </source>
</reference>
<reference key="2">
    <citation type="journal article" date="2002" name="Gene">
        <title>Expressed sequence tag analysis of expression profiles of zebrafish testis and ovary.</title>
        <authorList>
            <person name="Zeng S."/>
            <person name="Gong Z."/>
        </authorList>
    </citation>
    <scope>NUCLEOTIDE SEQUENCE [MRNA] OF 109-343</scope>
</reference>
<dbReference type="EMBL" id="BX537259">
    <property type="protein sequence ID" value="CAI29392.1"/>
    <property type="molecule type" value="Genomic_DNA"/>
</dbReference>
<dbReference type="EMBL" id="BM141230">
    <property type="status" value="NOT_ANNOTATED_CDS"/>
    <property type="molecule type" value="mRNA"/>
</dbReference>
<dbReference type="RefSeq" id="NP_001153485.1">
    <property type="nucleotide sequence ID" value="NM_001160013.1"/>
</dbReference>
<dbReference type="SMR" id="Q5PNP6"/>
<dbReference type="FunCoup" id="Q5PNP6">
    <property type="interactions" value="1147"/>
</dbReference>
<dbReference type="STRING" id="7955.ENSDARP00000116446"/>
<dbReference type="PaxDb" id="7955-ENSDARP00000064482"/>
<dbReference type="Ensembl" id="ENSDART00000137135">
    <property type="protein sequence ID" value="ENSDARP00000116446"/>
    <property type="gene ID" value="ENSDARG00000043912"/>
</dbReference>
<dbReference type="GeneID" id="568897"/>
<dbReference type="KEGG" id="dre:568897"/>
<dbReference type="AGR" id="ZFIN:ZDB-GENE-040724-211"/>
<dbReference type="CTD" id="101928601"/>
<dbReference type="ZFIN" id="ZDB-GENE-040724-211">
    <property type="gene designation" value="mei4"/>
</dbReference>
<dbReference type="eggNOG" id="ENOG502S31K">
    <property type="taxonomic scope" value="Eukaryota"/>
</dbReference>
<dbReference type="HOGENOM" id="CLU_055456_0_0_1"/>
<dbReference type="InParanoid" id="Q5PNP6"/>
<dbReference type="OrthoDB" id="6351423at2759"/>
<dbReference type="PhylomeDB" id="Q5PNP6"/>
<dbReference type="PRO" id="PR:Q5PNP6"/>
<dbReference type="Proteomes" id="UP000000437">
    <property type="component" value="Chromosome 20"/>
</dbReference>
<dbReference type="Bgee" id="ENSDARG00000043912">
    <property type="expression patterns" value="Expressed in testis and 10 other cell types or tissues"/>
</dbReference>
<dbReference type="ExpressionAtlas" id="Q5PNP6">
    <property type="expression patterns" value="baseline"/>
</dbReference>
<dbReference type="GO" id="GO:0000800">
    <property type="term" value="C:lateral element"/>
    <property type="evidence" value="ECO:0000250"/>
    <property type="project" value="UniProtKB"/>
</dbReference>
<dbReference type="GO" id="GO:0006310">
    <property type="term" value="P:DNA recombination"/>
    <property type="evidence" value="ECO:0007669"/>
    <property type="project" value="UniProtKB-KW"/>
</dbReference>
<dbReference type="GO" id="GO:0007129">
    <property type="term" value="P:homologous chromosome pairing at meiosis"/>
    <property type="evidence" value="ECO:0000250"/>
    <property type="project" value="UniProtKB"/>
</dbReference>
<dbReference type="GO" id="GO:0042138">
    <property type="term" value="P:meiotic DNA double-strand break formation"/>
    <property type="evidence" value="ECO:0000250"/>
    <property type="project" value="UniProtKB"/>
</dbReference>
<dbReference type="GO" id="GO:0048477">
    <property type="term" value="P:oogenesis"/>
    <property type="evidence" value="ECO:0000250"/>
    <property type="project" value="UniProtKB"/>
</dbReference>
<dbReference type="GO" id="GO:0007283">
    <property type="term" value="P:spermatogenesis"/>
    <property type="evidence" value="ECO:0000250"/>
    <property type="project" value="UniProtKB"/>
</dbReference>
<dbReference type="InterPro" id="IPR025888">
    <property type="entry name" value="MEI4"/>
</dbReference>
<dbReference type="PANTHER" id="PTHR28575">
    <property type="entry name" value="MEIOSIS-SPECIFIC PROTEIN MEI4"/>
    <property type="match status" value="1"/>
</dbReference>
<dbReference type="PANTHER" id="PTHR28575:SF1">
    <property type="entry name" value="MEIOSIS-SPECIFIC PROTEIN MEI4"/>
    <property type="match status" value="1"/>
</dbReference>
<dbReference type="Pfam" id="PF13971">
    <property type="entry name" value="Mei4"/>
    <property type="match status" value="1"/>
</dbReference>
<accession>Q5PNP6</accession>
<proteinExistence type="evidence at transcript level"/>
<protein>
    <recommendedName>
        <fullName>Meiosis-specific protein MEI4</fullName>
    </recommendedName>
</protein>
<gene>
    <name type="primary">mei4</name>
    <name type="ORF">si:ch211-241p10.1</name>
</gene>
<sequence>MEGKSASCPEGVVSWYIRTSRLAVALAIIKLRPPGGARQFTESLAERLKRQDESWKSKAEGLHEDLLHLRQELLLTRTLLNTRSSAGQAPGQEIAKVLSQDDTREVNSGTLQTCLPPTPPNSQKVPPKDRQWRQDHRLTKHVQFLQRLSGLRSGFEESLCQDGDVVWDSVVQLLDCVVEDFRQAHTGQPLRHPEQLHNAIQVVAQTLSPGGARQGFPVQHFSRVEDLLKEMVNLLLTNQQLNAFSVQDSLSDCLLALGGNCCITRTPLIQLLMSQIIQLAQQLRDACEKSREEHEHHQVDWVCYQNSFYLFWLLERLAQDTDNRVNQELVVRLETKAFPLADEFSLFSLYMWRIGGLFRAGDS</sequence>
<name>MEI4_DANRE</name>
<organism>
    <name type="scientific">Danio rerio</name>
    <name type="common">Zebrafish</name>
    <name type="synonym">Brachydanio rerio</name>
    <dbReference type="NCBI Taxonomy" id="7955"/>
    <lineage>
        <taxon>Eukaryota</taxon>
        <taxon>Metazoa</taxon>
        <taxon>Chordata</taxon>
        <taxon>Craniata</taxon>
        <taxon>Vertebrata</taxon>
        <taxon>Euteleostomi</taxon>
        <taxon>Actinopterygii</taxon>
        <taxon>Neopterygii</taxon>
        <taxon>Teleostei</taxon>
        <taxon>Ostariophysi</taxon>
        <taxon>Cypriniformes</taxon>
        <taxon>Danionidae</taxon>
        <taxon>Danioninae</taxon>
        <taxon>Danio</taxon>
    </lineage>
</organism>